<organism>
    <name type="scientific">Plasmodium falciparum (isolate 3D7)</name>
    <dbReference type="NCBI Taxonomy" id="36329"/>
    <lineage>
        <taxon>Eukaryota</taxon>
        <taxon>Sar</taxon>
        <taxon>Alveolata</taxon>
        <taxon>Apicomplexa</taxon>
        <taxon>Aconoidasida</taxon>
        <taxon>Haemosporida</taxon>
        <taxon>Plasmodiidae</taxon>
        <taxon>Plasmodium</taxon>
        <taxon>Plasmodium (Laverania)</taxon>
    </lineage>
</organism>
<gene>
    <name type="ORF">PF10_0084</name>
    <name type="ORF">PF3D7_1008700</name>
</gene>
<proteinExistence type="evidence at protein level"/>
<keyword id="KW-0963">Cytoplasm</keyword>
<keyword id="KW-0206">Cytoskeleton</keyword>
<keyword id="KW-0342">GTP-binding</keyword>
<keyword id="KW-0460">Magnesium</keyword>
<keyword id="KW-0479">Metal-binding</keyword>
<keyword id="KW-0493">Microtubule</keyword>
<keyword id="KW-0547">Nucleotide-binding</keyword>
<keyword id="KW-1185">Reference proteome</keyword>
<comment type="function">
    <text evidence="4">Tubulin is the major constituent of microtubules, a cylinder consisting of laterally associated linear protofilaments composed of alpha- and beta-tubulin heterodimers (PubMed:33633135). Microtubules grow by the addition of GTP-tubulin dimers to the microtubule end, where a stabilizing cap forms. Below the cap, tubulin dimers are in GDP-bound state, owing to GTPase activity of alpha-tubulin.</text>
</comment>
<comment type="cofactor">
    <cofactor evidence="1">
        <name>Mg(2+)</name>
        <dbReference type="ChEBI" id="CHEBI:18420"/>
    </cofactor>
</comment>
<comment type="subunit">
    <text evidence="4 5 6">Dimer of alpha and beta chains (Probable). A typical microtubule is a hollow water-filled tube with an outer diameter of 25 nm and an inner diameter of 15 nM. Alpha-beta heterodimers associate head-to-tail to form protofilaments running lengthwise along the microtubule wall with the beta-tubulin subunit facing the microtubule plus end conferring a structural polarity. Microtubules usually have 13 protofilaments but different protofilament numbers can be found in some organisms and specialized cells (Probable). Interacts with DCX/apicortin; the interaction stabilizes microtubule assembly (PubMed:33633135).</text>
</comment>
<comment type="subcellular location">
    <subcellularLocation>
        <location evidence="4">Cytoplasm</location>
        <location evidence="4">Cytoskeleton</location>
    </subcellularLocation>
    <text evidence="4">Localizes to the parasite surface in subpellicular regions in trophozoites and schizonts (PubMed:33633135). In merozoites, localize to the apical end of the parasite (PubMed:33633135).</text>
</comment>
<comment type="developmental stage">
    <text evidence="4">Expressed during the parasite blood stage, including in trophozoites, schizonts and free merozoites (at protein level).</text>
</comment>
<comment type="miscellaneous">
    <text evidence="4">Tamoxifen used to treat breast cancer blocks the interaction between apicortin and, alpha-tubulin 1 and beta-tubulin resulting in microtubule destabilization.</text>
</comment>
<comment type="similarity">
    <text evidence="5">Belongs to the tubulin family.</text>
</comment>
<feature type="chain" id="PRO_0000233402" description="Tubulin beta chain">
    <location>
        <begin position="1"/>
        <end position="445"/>
    </location>
</feature>
<feature type="region of interest" description="Disordered" evidence="3">
    <location>
        <begin position="426"/>
        <end position="445"/>
    </location>
</feature>
<feature type="compositionally biased region" description="Acidic residues" evidence="3">
    <location>
        <begin position="429"/>
        <end position="445"/>
    </location>
</feature>
<feature type="binding site" evidence="2">
    <location>
        <position position="11"/>
    </location>
    <ligand>
        <name>GTP</name>
        <dbReference type="ChEBI" id="CHEBI:37565"/>
    </ligand>
</feature>
<feature type="binding site" evidence="1">
    <location>
        <position position="69"/>
    </location>
    <ligand>
        <name>GTP</name>
        <dbReference type="ChEBI" id="CHEBI:37565"/>
    </ligand>
</feature>
<feature type="binding site" evidence="1">
    <location>
        <position position="69"/>
    </location>
    <ligand>
        <name>Mg(2+)</name>
        <dbReference type="ChEBI" id="CHEBI:18420"/>
    </ligand>
</feature>
<feature type="binding site" evidence="2">
    <location>
        <position position="138"/>
    </location>
    <ligand>
        <name>GTP</name>
        <dbReference type="ChEBI" id="CHEBI:37565"/>
    </ligand>
</feature>
<feature type="binding site" evidence="2">
    <location>
        <position position="142"/>
    </location>
    <ligand>
        <name>GTP</name>
        <dbReference type="ChEBI" id="CHEBI:37565"/>
    </ligand>
</feature>
<feature type="binding site" evidence="2">
    <location>
        <position position="143"/>
    </location>
    <ligand>
        <name>GTP</name>
        <dbReference type="ChEBI" id="CHEBI:37565"/>
    </ligand>
</feature>
<feature type="binding site" evidence="2">
    <location>
        <position position="144"/>
    </location>
    <ligand>
        <name>GTP</name>
        <dbReference type="ChEBI" id="CHEBI:37565"/>
    </ligand>
</feature>
<feature type="binding site" evidence="2">
    <location>
        <position position="204"/>
    </location>
    <ligand>
        <name>GTP</name>
        <dbReference type="ChEBI" id="CHEBI:37565"/>
    </ligand>
</feature>
<feature type="binding site" evidence="2">
    <location>
        <position position="226"/>
    </location>
    <ligand>
        <name>GTP</name>
        <dbReference type="ChEBI" id="CHEBI:37565"/>
    </ligand>
</feature>
<evidence type="ECO:0000250" key="1">
    <source>
        <dbReference type="UniProtKB" id="P68363"/>
    </source>
</evidence>
<evidence type="ECO:0000250" key="2">
    <source>
        <dbReference type="UniProtKB" id="Q13509"/>
    </source>
</evidence>
<evidence type="ECO:0000256" key="3">
    <source>
        <dbReference type="SAM" id="MobiDB-lite"/>
    </source>
</evidence>
<evidence type="ECO:0000269" key="4">
    <source>
    </source>
</evidence>
<evidence type="ECO:0000305" key="5"/>
<evidence type="ECO:0000305" key="6">
    <source>
    </source>
</evidence>
<name>TBB_PLAF7</name>
<sequence length="445" mass="49751">MREIVHIQAGQCGNQIGAKFWEVISDEHGIDPSGTYCGDSDLQLERVDVFYNEATGGRYVPRAILMDLEPGTMDSVRAGPFGQLFRPDNFVFGQTGAGNNWAKGHYTEGAELIDAVLDVVRKEAEGCDCLQGFQITHSLGGGTGSGMGTLLISKIREEYPDRIMETFSVFPSPKVSDTVVEPYNATLSVHQLVENADEVQVIDNEALYDICFRTLKLTTPTYGDLNHLVSAAMSGVTCSLRFPGQLNSDLRKLAVNLIPFPRLHFFMIGFAPLTSRGSQQYRALTVPELTQQMFDAKNMMCASDPRHGRYLTACAMFRGRMSTKEVDEQMLNVQNKNSSYFVEWIPHNTKSSVCDIPPKGLKMAVTFVGNSTAIQEMFKRVSDQFTAMFRRKAFLHWYTGEGMDEMEFTEAESNMNDLVSEYQQYQDATAEEEGEFEEEEGDVEA</sequence>
<reference key="1">
    <citation type="journal article" date="2002" name="Nature">
        <title>Genome sequence of the human malaria parasite Plasmodium falciparum.</title>
        <authorList>
            <person name="Gardner M.J."/>
            <person name="Hall N."/>
            <person name="Fung E."/>
            <person name="White O."/>
            <person name="Berriman M."/>
            <person name="Hyman R.W."/>
            <person name="Carlton J.M."/>
            <person name="Pain A."/>
            <person name="Nelson K.E."/>
            <person name="Bowman S."/>
            <person name="Paulsen I.T."/>
            <person name="James K.D."/>
            <person name="Eisen J.A."/>
            <person name="Rutherford K.M."/>
            <person name="Salzberg S.L."/>
            <person name="Craig A."/>
            <person name="Kyes S."/>
            <person name="Chan M.-S."/>
            <person name="Nene V."/>
            <person name="Shallom S.J."/>
            <person name="Suh B."/>
            <person name="Peterson J."/>
            <person name="Angiuoli S."/>
            <person name="Pertea M."/>
            <person name="Allen J."/>
            <person name="Selengut J."/>
            <person name="Haft D."/>
            <person name="Mather M.W."/>
            <person name="Vaidya A.B."/>
            <person name="Martin D.M.A."/>
            <person name="Fairlamb A.H."/>
            <person name="Fraunholz M.J."/>
            <person name="Roos D.S."/>
            <person name="Ralph S.A."/>
            <person name="McFadden G.I."/>
            <person name="Cummings L.M."/>
            <person name="Subramanian G.M."/>
            <person name="Mungall C."/>
            <person name="Venter J.C."/>
            <person name="Carucci D.J."/>
            <person name="Hoffman S.L."/>
            <person name="Newbold C."/>
            <person name="Davis R.W."/>
            <person name="Fraser C.M."/>
            <person name="Barrell B.G."/>
        </authorList>
    </citation>
    <scope>NUCLEOTIDE SEQUENCE [LARGE SCALE GENOMIC DNA]</scope>
    <source>
        <strain>3D7</strain>
    </source>
</reference>
<reference key="2">
    <citation type="journal article" date="2021" name="Sci. Rep.">
        <title>Interaction of Plasmodium falciparum apicortin with alpha- and beta-tubulin is critical for parasite growth and survival.</title>
        <authorList>
            <person name="Chakrabarti M."/>
            <person name="Joshi N."/>
            <person name="Kumari G."/>
            <person name="Singh P."/>
            <person name="Shoaib R."/>
            <person name="Munjal A."/>
            <person name="Kumar V."/>
            <person name="Behl A."/>
            <person name="Abid M."/>
            <person name="Garg S."/>
            <person name="Gupta S."/>
            <person name="Singh S."/>
        </authorList>
    </citation>
    <scope>FUNCTION</scope>
    <scope>SUBCELLULAR LOCATION</scope>
    <scope>DEVELOPMENTAL STAGE</scope>
</reference>
<accession>Q7KQL5</accession>
<accession>A0A143ZWL7</accession>
<dbReference type="EMBL" id="LN999944">
    <property type="protein sequence ID" value="CZT98336.1"/>
    <property type="molecule type" value="Genomic_DNA"/>
</dbReference>
<dbReference type="RefSeq" id="XP_001347369.1">
    <property type="nucleotide sequence ID" value="XM_001347333.1"/>
</dbReference>
<dbReference type="SMR" id="Q7KQL5"/>
<dbReference type="BioGRID" id="1205665">
    <property type="interactions" value="2"/>
</dbReference>
<dbReference type="FunCoup" id="Q7KQL5">
    <property type="interactions" value="113"/>
</dbReference>
<dbReference type="IntAct" id="Q7KQL5">
    <property type="interactions" value="2"/>
</dbReference>
<dbReference type="STRING" id="36329.Q7KQL5"/>
<dbReference type="DrugBank" id="DB11638">
    <property type="generic name" value="Artenimol"/>
</dbReference>
<dbReference type="SwissPalm" id="Q7KQL5"/>
<dbReference type="PaxDb" id="5833-PF10_0084"/>
<dbReference type="EnsemblProtists" id="CZT98336">
    <property type="protein sequence ID" value="CZT98336"/>
    <property type="gene ID" value="PF3D7_1008700"/>
</dbReference>
<dbReference type="GeneID" id="810242"/>
<dbReference type="KEGG" id="pfa:PF3D7_1008700"/>
<dbReference type="VEuPathDB" id="PlasmoDB:PF3D7_1008700"/>
<dbReference type="HOGENOM" id="CLU_015718_1_1_1"/>
<dbReference type="InParanoid" id="Q7KQL5"/>
<dbReference type="OMA" id="WVPRSVN"/>
<dbReference type="OrthoDB" id="1662883at2759"/>
<dbReference type="PhylomeDB" id="Q7KQL5"/>
<dbReference type="Reactome" id="R-PFA-3371497">
    <property type="pathway name" value="HSP90 chaperone cycle for steroid hormone receptors (SHR) in the presence of ligand"/>
</dbReference>
<dbReference type="Reactome" id="R-PFA-5617833">
    <property type="pathway name" value="Cilium Assembly"/>
</dbReference>
<dbReference type="Reactome" id="R-PFA-6798695">
    <property type="pathway name" value="Neutrophil degranulation"/>
</dbReference>
<dbReference type="Reactome" id="R-PFA-8955332">
    <property type="pathway name" value="Carboxyterminal post-translational modifications of tubulin"/>
</dbReference>
<dbReference type="Reactome" id="R-PFA-9646399">
    <property type="pathway name" value="Aggrephagy"/>
</dbReference>
<dbReference type="Proteomes" id="UP000001450">
    <property type="component" value="Chromosome 10"/>
</dbReference>
<dbReference type="GO" id="GO:0005737">
    <property type="term" value="C:cytoplasm"/>
    <property type="evidence" value="ECO:0000318"/>
    <property type="project" value="GO_Central"/>
</dbReference>
<dbReference type="GO" id="GO:0005874">
    <property type="term" value="C:microtubule"/>
    <property type="evidence" value="ECO:0000250"/>
    <property type="project" value="GeneDB"/>
</dbReference>
<dbReference type="GO" id="GO:0005525">
    <property type="term" value="F:GTP binding"/>
    <property type="evidence" value="ECO:0000318"/>
    <property type="project" value="GO_Central"/>
</dbReference>
<dbReference type="GO" id="GO:0003924">
    <property type="term" value="F:GTPase activity"/>
    <property type="evidence" value="ECO:0007669"/>
    <property type="project" value="InterPro"/>
</dbReference>
<dbReference type="GO" id="GO:0046872">
    <property type="term" value="F:metal ion binding"/>
    <property type="evidence" value="ECO:0007669"/>
    <property type="project" value="UniProtKB-KW"/>
</dbReference>
<dbReference type="GO" id="GO:0005200">
    <property type="term" value="F:structural constituent of cytoskeleton"/>
    <property type="evidence" value="ECO:0000250"/>
    <property type="project" value="GeneDB"/>
</dbReference>
<dbReference type="GO" id="GO:0000226">
    <property type="term" value="P:microtubule cytoskeleton organization"/>
    <property type="evidence" value="ECO:0000250"/>
    <property type="project" value="GeneDB"/>
</dbReference>
<dbReference type="GO" id="GO:0000278">
    <property type="term" value="P:mitotic cell cycle"/>
    <property type="evidence" value="ECO:0000318"/>
    <property type="project" value="GO_Central"/>
</dbReference>
<dbReference type="CDD" id="cd02187">
    <property type="entry name" value="beta_tubulin"/>
    <property type="match status" value="1"/>
</dbReference>
<dbReference type="FunFam" id="1.10.287.600:FF:000006">
    <property type="entry name" value="Tubulin beta chain"/>
    <property type="match status" value="1"/>
</dbReference>
<dbReference type="FunFam" id="3.30.1330.20:FF:000002">
    <property type="entry name" value="Tubulin beta chain"/>
    <property type="match status" value="1"/>
</dbReference>
<dbReference type="FunFam" id="3.40.50.1440:FF:000003">
    <property type="entry name" value="Tubulin beta chain"/>
    <property type="match status" value="1"/>
</dbReference>
<dbReference type="Gene3D" id="1.10.287.600">
    <property type="entry name" value="Helix hairpin bin"/>
    <property type="match status" value="1"/>
</dbReference>
<dbReference type="Gene3D" id="3.30.1330.20">
    <property type="entry name" value="Tubulin/FtsZ, C-terminal domain"/>
    <property type="match status" value="1"/>
</dbReference>
<dbReference type="Gene3D" id="3.40.50.1440">
    <property type="entry name" value="Tubulin/FtsZ, GTPase domain"/>
    <property type="match status" value="1"/>
</dbReference>
<dbReference type="InterPro" id="IPR013838">
    <property type="entry name" value="Beta-tubulin_BS"/>
</dbReference>
<dbReference type="InterPro" id="IPR002453">
    <property type="entry name" value="Beta_tubulin"/>
</dbReference>
<dbReference type="InterPro" id="IPR008280">
    <property type="entry name" value="Tub_FtsZ_C"/>
</dbReference>
<dbReference type="InterPro" id="IPR000217">
    <property type="entry name" value="Tubulin"/>
</dbReference>
<dbReference type="InterPro" id="IPR037103">
    <property type="entry name" value="Tubulin/FtsZ-like_C"/>
</dbReference>
<dbReference type="InterPro" id="IPR018316">
    <property type="entry name" value="Tubulin/FtsZ_2-layer-sand-dom"/>
</dbReference>
<dbReference type="InterPro" id="IPR036525">
    <property type="entry name" value="Tubulin/FtsZ_GTPase_sf"/>
</dbReference>
<dbReference type="InterPro" id="IPR023123">
    <property type="entry name" value="Tubulin_C"/>
</dbReference>
<dbReference type="InterPro" id="IPR017975">
    <property type="entry name" value="Tubulin_CS"/>
</dbReference>
<dbReference type="InterPro" id="IPR003008">
    <property type="entry name" value="Tubulin_FtsZ_GTPase"/>
</dbReference>
<dbReference type="PANTHER" id="PTHR11588">
    <property type="entry name" value="TUBULIN"/>
    <property type="match status" value="1"/>
</dbReference>
<dbReference type="Pfam" id="PF00091">
    <property type="entry name" value="Tubulin"/>
    <property type="match status" value="1"/>
</dbReference>
<dbReference type="Pfam" id="PF03953">
    <property type="entry name" value="Tubulin_C"/>
    <property type="match status" value="1"/>
</dbReference>
<dbReference type="PRINTS" id="PR01163">
    <property type="entry name" value="BETATUBULIN"/>
</dbReference>
<dbReference type="PRINTS" id="PR01161">
    <property type="entry name" value="TUBULIN"/>
</dbReference>
<dbReference type="SMART" id="SM00864">
    <property type="entry name" value="Tubulin"/>
    <property type="match status" value="1"/>
</dbReference>
<dbReference type="SMART" id="SM00865">
    <property type="entry name" value="Tubulin_C"/>
    <property type="match status" value="1"/>
</dbReference>
<dbReference type="SUPFAM" id="SSF55307">
    <property type="entry name" value="Tubulin C-terminal domain-like"/>
    <property type="match status" value="1"/>
</dbReference>
<dbReference type="SUPFAM" id="SSF52490">
    <property type="entry name" value="Tubulin nucleotide-binding domain-like"/>
    <property type="match status" value="1"/>
</dbReference>
<dbReference type="PROSITE" id="PS00227">
    <property type="entry name" value="TUBULIN"/>
    <property type="match status" value="1"/>
</dbReference>
<dbReference type="PROSITE" id="PS00228">
    <property type="entry name" value="TUBULIN_B_AUTOREG"/>
    <property type="match status" value="1"/>
</dbReference>
<protein>
    <recommendedName>
        <fullName>Tubulin beta chain</fullName>
    </recommendedName>
    <alternativeName>
        <fullName>Beta-tubulin</fullName>
    </alternativeName>
</protein>